<sequence length="158" mass="18210">MRKRQAKKRPLLPDPKFNDQLVTRFVNMMMWDGKKSVAFKIFYDAIAIVDEKKQDEEKTGLEIWKDALSNVMPHVEVRSRRVGGATFQIPMQIRPDRKVSTAMKWLISFSRKRNEKSMAGKLAAEVLAAAKEEGAAVKKRVDTHKMAEANKAFSHFRF</sequence>
<proteinExistence type="inferred from homology"/>
<organism>
    <name type="scientific">Christiangramia forsetii (strain DSM 17595 / CGMCC 1.15422 / KT0803)</name>
    <name type="common">Gramella forsetii</name>
    <dbReference type="NCBI Taxonomy" id="411154"/>
    <lineage>
        <taxon>Bacteria</taxon>
        <taxon>Pseudomonadati</taxon>
        <taxon>Bacteroidota</taxon>
        <taxon>Flavobacteriia</taxon>
        <taxon>Flavobacteriales</taxon>
        <taxon>Flavobacteriaceae</taxon>
        <taxon>Christiangramia</taxon>
    </lineage>
</organism>
<evidence type="ECO:0000255" key="1">
    <source>
        <dbReference type="HAMAP-Rule" id="MF_00480"/>
    </source>
</evidence>
<evidence type="ECO:0000305" key="2"/>
<accession>A0M5A1</accession>
<reference key="1">
    <citation type="journal article" date="2006" name="Environ. Microbiol.">
        <title>Whole genome analysis of the marine Bacteroidetes'Gramella forsetii' reveals adaptations to degradation of polymeric organic matter.</title>
        <authorList>
            <person name="Bauer M."/>
            <person name="Kube M."/>
            <person name="Teeling H."/>
            <person name="Richter M."/>
            <person name="Lombardot T."/>
            <person name="Allers E."/>
            <person name="Wuerdemann C.A."/>
            <person name="Quast C."/>
            <person name="Kuhl H."/>
            <person name="Knaust F."/>
            <person name="Woebken D."/>
            <person name="Bischof K."/>
            <person name="Mussmann M."/>
            <person name="Choudhuri J.V."/>
            <person name="Meyer F."/>
            <person name="Reinhardt R."/>
            <person name="Amann R.I."/>
            <person name="Gloeckner F.O."/>
        </authorList>
    </citation>
    <scope>NUCLEOTIDE SEQUENCE [LARGE SCALE GENOMIC DNA]</scope>
    <source>
        <strain>DSM 17595 / CGMCC 1.15422 / KT0803</strain>
    </source>
</reference>
<feature type="chain" id="PRO_0000344295" description="Small ribosomal subunit protein uS7">
    <location>
        <begin position="1"/>
        <end position="158"/>
    </location>
</feature>
<keyword id="KW-0687">Ribonucleoprotein</keyword>
<keyword id="KW-0689">Ribosomal protein</keyword>
<keyword id="KW-0694">RNA-binding</keyword>
<keyword id="KW-0699">rRNA-binding</keyword>
<keyword id="KW-0820">tRNA-binding</keyword>
<name>RS7_CHRFK</name>
<gene>
    <name evidence="1" type="primary">rpsG</name>
    <name type="ordered locus">GFO_2842</name>
</gene>
<protein>
    <recommendedName>
        <fullName evidence="1">Small ribosomal subunit protein uS7</fullName>
    </recommendedName>
    <alternativeName>
        <fullName evidence="2">30S ribosomal protein S7</fullName>
    </alternativeName>
</protein>
<comment type="function">
    <text evidence="1">One of the primary rRNA binding proteins, it binds directly to 16S rRNA where it nucleates assembly of the head domain of the 30S subunit. Is located at the subunit interface close to the decoding center, probably blocks exit of the E-site tRNA.</text>
</comment>
<comment type="subunit">
    <text evidence="1">Part of the 30S ribosomal subunit. Contacts proteins S9 and S11.</text>
</comment>
<comment type="similarity">
    <text evidence="1">Belongs to the universal ribosomal protein uS7 family.</text>
</comment>
<dbReference type="EMBL" id="CU207366">
    <property type="protein sequence ID" value="CAL67796.1"/>
    <property type="molecule type" value="Genomic_DNA"/>
</dbReference>
<dbReference type="RefSeq" id="WP_011710698.1">
    <property type="nucleotide sequence ID" value="NC_008571.1"/>
</dbReference>
<dbReference type="SMR" id="A0M5A1"/>
<dbReference type="STRING" id="411154.GFO_2842"/>
<dbReference type="KEGG" id="gfo:GFO_2842"/>
<dbReference type="eggNOG" id="COG0049">
    <property type="taxonomic scope" value="Bacteria"/>
</dbReference>
<dbReference type="HOGENOM" id="CLU_072226_1_1_10"/>
<dbReference type="OrthoDB" id="9807653at2"/>
<dbReference type="Proteomes" id="UP000000755">
    <property type="component" value="Chromosome"/>
</dbReference>
<dbReference type="GO" id="GO:0015935">
    <property type="term" value="C:small ribosomal subunit"/>
    <property type="evidence" value="ECO:0007669"/>
    <property type="project" value="InterPro"/>
</dbReference>
<dbReference type="GO" id="GO:0019843">
    <property type="term" value="F:rRNA binding"/>
    <property type="evidence" value="ECO:0007669"/>
    <property type="project" value="UniProtKB-UniRule"/>
</dbReference>
<dbReference type="GO" id="GO:0003735">
    <property type="term" value="F:structural constituent of ribosome"/>
    <property type="evidence" value="ECO:0007669"/>
    <property type="project" value="InterPro"/>
</dbReference>
<dbReference type="GO" id="GO:0000049">
    <property type="term" value="F:tRNA binding"/>
    <property type="evidence" value="ECO:0007669"/>
    <property type="project" value="UniProtKB-UniRule"/>
</dbReference>
<dbReference type="GO" id="GO:0006412">
    <property type="term" value="P:translation"/>
    <property type="evidence" value="ECO:0007669"/>
    <property type="project" value="UniProtKB-UniRule"/>
</dbReference>
<dbReference type="CDD" id="cd14869">
    <property type="entry name" value="uS7_Bacteria"/>
    <property type="match status" value="1"/>
</dbReference>
<dbReference type="FunFam" id="1.10.455.10:FF:000001">
    <property type="entry name" value="30S ribosomal protein S7"/>
    <property type="match status" value="1"/>
</dbReference>
<dbReference type="Gene3D" id="1.10.455.10">
    <property type="entry name" value="Ribosomal protein S7 domain"/>
    <property type="match status" value="1"/>
</dbReference>
<dbReference type="HAMAP" id="MF_00480_B">
    <property type="entry name" value="Ribosomal_uS7_B"/>
    <property type="match status" value="1"/>
</dbReference>
<dbReference type="InterPro" id="IPR000235">
    <property type="entry name" value="Ribosomal_uS7"/>
</dbReference>
<dbReference type="InterPro" id="IPR005717">
    <property type="entry name" value="Ribosomal_uS7_bac/org-type"/>
</dbReference>
<dbReference type="InterPro" id="IPR020606">
    <property type="entry name" value="Ribosomal_uS7_CS"/>
</dbReference>
<dbReference type="InterPro" id="IPR023798">
    <property type="entry name" value="Ribosomal_uS7_dom"/>
</dbReference>
<dbReference type="InterPro" id="IPR036823">
    <property type="entry name" value="Ribosomal_uS7_dom_sf"/>
</dbReference>
<dbReference type="NCBIfam" id="TIGR01029">
    <property type="entry name" value="rpsG_bact"/>
    <property type="match status" value="1"/>
</dbReference>
<dbReference type="PANTHER" id="PTHR11205">
    <property type="entry name" value="RIBOSOMAL PROTEIN S7"/>
    <property type="match status" value="1"/>
</dbReference>
<dbReference type="Pfam" id="PF00177">
    <property type="entry name" value="Ribosomal_S7"/>
    <property type="match status" value="1"/>
</dbReference>
<dbReference type="PIRSF" id="PIRSF002122">
    <property type="entry name" value="RPS7p_RPS7a_RPS5e_RPS7o"/>
    <property type="match status" value="1"/>
</dbReference>
<dbReference type="SUPFAM" id="SSF47973">
    <property type="entry name" value="Ribosomal protein S7"/>
    <property type="match status" value="1"/>
</dbReference>
<dbReference type="PROSITE" id="PS00052">
    <property type="entry name" value="RIBOSOMAL_S7"/>
    <property type="match status" value="1"/>
</dbReference>